<evidence type="ECO:0000305" key="1"/>
<protein>
    <recommendedName>
        <fullName>U2-plectoxin-Pt1a</fullName>
        <shortName>U2-PLTX-Pt1a</shortName>
    </recommendedName>
    <alternativeName>
        <fullName>Plectoxin IX</fullName>
        <shortName>PLT-IX</shortName>
        <shortName>PLTIX</shortName>
    </alternativeName>
    <alternativeName>
        <fullName>Plectoxin-9</fullName>
    </alternativeName>
</protein>
<reference key="1">
    <citation type="journal article" date="1994" name="J. Biol. Chem.">
        <title>Isolation and sequencing of insecticidal peptides from the primitive hunting spider, Plectreurys tristis (Simon).</title>
        <authorList>
            <person name="Quistad G.B."/>
            <person name="Skinner W.S."/>
        </authorList>
    </citation>
    <scope>PROTEIN SEQUENCE</scope>
    <source>
        <tissue>Venom</tissue>
    </source>
</reference>
<dbReference type="PIR" id="G53613">
    <property type="entry name" value="G53613"/>
</dbReference>
<dbReference type="SMR" id="P36989"/>
<dbReference type="ArachnoServer" id="AS000411">
    <property type="toxin name" value="U2-plectoxin-Pt1a"/>
</dbReference>
<dbReference type="GO" id="GO:0005576">
    <property type="term" value="C:extracellular region"/>
    <property type="evidence" value="ECO:0007669"/>
    <property type="project" value="UniProtKB-SubCell"/>
</dbReference>
<dbReference type="GO" id="GO:0090729">
    <property type="term" value="F:toxin activity"/>
    <property type="evidence" value="ECO:0007669"/>
    <property type="project" value="UniProtKB-KW"/>
</dbReference>
<sequence>CAKHSETCKNGNCCTCTQYRGKDEPMACRRGTHGQRCQCVMKIMKH</sequence>
<proteinExistence type="evidence at protein level"/>
<name>TXP9_PLETR</name>
<accession>P36989</accession>
<keyword id="KW-0903">Direct protein sequencing</keyword>
<keyword id="KW-1015">Disulfide bond</keyword>
<keyword id="KW-0528">Neurotoxin</keyword>
<keyword id="KW-0964">Secreted</keyword>
<keyword id="KW-0800">Toxin</keyword>
<feature type="chain" id="PRO_0000087661" description="U2-plectoxin-Pt1a">
    <location>
        <begin position="1"/>
        <end position="46"/>
    </location>
</feature>
<organism>
    <name type="scientific">Plectreurys tristis</name>
    <name type="common">Spider</name>
    <name type="synonym">Plectreurys bispinosus</name>
    <dbReference type="NCBI Taxonomy" id="33319"/>
    <lineage>
        <taxon>Eukaryota</taxon>
        <taxon>Metazoa</taxon>
        <taxon>Ecdysozoa</taxon>
        <taxon>Arthropoda</taxon>
        <taxon>Chelicerata</taxon>
        <taxon>Arachnida</taxon>
        <taxon>Araneae</taxon>
        <taxon>Araneomorphae</taxon>
        <taxon>Haplogynae</taxon>
        <taxon>Pholcoidea</taxon>
        <taxon>Plectreuridae</taxon>
        <taxon>Plectreurys</taxon>
    </lineage>
</organism>
<comment type="function">
    <text>Potent toxin that may paralyze and/or kill insect pests such as H.virescens (lepidoptera), S.exigua (beet armyworm) and M.sexta (tobacco hornworm).</text>
</comment>
<comment type="subcellular location">
    <subcellularLocation>
        <location>Secreted</location>
    </subcellularLocation>
</comment>
<comment type="tissue specificity">
    <text>Expressed by the venom gland.</text>
</comment>
<comment type="PTM">
    <text evidence="1">Contains 4 disulfide bonds.</text>
</comment>